<gene>
    <name evidence="1" type="primary">psd</name>
    <name type="ordered locus">Ppro_2554</name>
</gene>
<proteinExistence type="inferred from homology"/>
<keyword id="KW-1003">Cell membrane</keyword>
<keyword id="KW-0210">Decarboxylase</keyword>
<keyword id="KW-0444">Lipid biosynthesis</keyword>
<keyword id="KW-0443">Lipid metabolism</keyword>
<keyword id="KW-0456">Lyase</keyword>
<keyword id="KW-0472">Membrane</keyword>
<keyword id="KW-0594">Phospholipid biosynthesis</keyword>
<keyword id="KW-1208">Phospholipid metabolism</keyword>
<keyword id="KW-0670">Pyruvate</keyword>
<keyword id="KW-1185">Reference proteome</keyword>
<keyword id="KW-0865">Zymogen</keyword>
<evidence type="ECO:0000255" key="1">
    <source>
        <dbReference type="HAMAP-Rule" id="MF_00664"/>
    </source>
</evidence>
<dbReference type="EC" id="4.1.1.65" evidence="1"/>
<dbReference type="EMBL" id="CP000482">
    <property type="protein sequence ID" value="ABL00159.1"/>
    <property type="molecule type" value="Genomic_DNA"/>
</dbReference>
<dbReference type="RefSeq" id="WP_011736413.1">
    <property type="nucleotide sequence ID" value="NC_008609.1"/>
</dbReference>
<dbReference type="STRING" id="338966.Ppro_2554"/>
<dbReference type="KEGG" id="ppd:Ppro_2554"/>
<dbReference type="eggNOG" id="COG0688">
    <property type="taxonomic scope" value="Bacteria"/>
</dbReference>
<dbReference type="HOGENOM" id="CLU_072492_0_0_7"/>
<dbReference type="OrthoDB" id="9790893at2"/>
<dbReference type="UniPathway" id="UPA00558">
    <property type="reaction ID" value="UER00616"/>
</dbReference>
<dbReference type="Proteomes" id="UP000006732">
    <property type="component" value="Chromosome"/>
</dbReference>
<dbReference type="GO" id="GO:0005886">
    <property type="term" value="C:plasma membrane"/>
    <property type="evidence" value="ECO:0007669"/>
    <property type="project" value="UniProtKB-SubCell"/>
</dbReference>
<dbReference type="GO" id="GO:0004609">
    <property type="term" value="F:phosphatidylserine decarboxylase activity"/>
    <property type="evidence" value="ECO:0007669"/>
    <property type="project" value="UniProtKB-UniRule"/>
</dbReference>
<dbReference type="GO" id="GO:0006646">
    <property type="term" value="P:phosphatidylethanolamine biosynthetic process"/>
    <property type="evidence" value="ECO:0007669"/>
    <property type="project" value="UniProtKB-UniRule"/>
</dbReference>
<dbReference type="HAMAP" id="MF_00664">
    <property type="entry name" value="PS_decarb_PSD_A"/>
    <property type="match status" value="1"/>
</dbReference>
<dbReference type="InterPro" id="IPR003817">
    <property type="entry name" value="PS_Dcarbxylase"/>
</dbReference>
<dbReference type="InterPro" id="IPR033175">
    <property type="entry name" value="PSD-A"/>
</dbReference>
<dbReference type="NCBIfam" id="NF003678">
    <property type="entry name" value="PRK05305.1-2"/>
    <property type="match status" value="1"/>
</dbReference>
<dbReference type="NCBIfam" id="NF003685">
    <property type="entry name" value="PRK05305.2-5"/>
    <property type="match status" value="1"/>
</dbReference>
<dbReference type="PANTHER" id="PTHR35809">
    <property type="entry name" value="ARCHAETIDYLSERINE DECARBOXYLASE PROENZYME-RELATED"/>
    <property type="match status" value="1"/>
</dbReference>
<dbReference type="PANTHER" id="PTHR35809:SF1">
    <property type="entry name" value="ARCHAETIDYLSERINE DECARBOXYLASE PROENZYME-RELATED"/>
    <property type="match status" value="1"/>
</dbReference>
<dbReference type="Pfam" id="PF02666">
    <property type="entry name" value="PS_Dcarbxylase"/>
    <property type="match status" value="1"/>
</dbReference>
<name>PSD_PELPD</name>
<sequence length="220" mass="24106">MKNQNTPIAFEGFPFIAGFAALTLLTALSAGKLCSAILYGFSALFALLTLFSLYFFRNPQRTPPADERAVVAPADGTVIVVDRVPVTPLGHEALKISIFMSVFNVHVNRVPFSGRVVELTHTPGKFFDVRDSRSSCENERSTIVLETVSGLRMAFVQVAGLIARRIVCYARNGEMLERGKRYGLIRFGSRLDVYLPPDVQPLVKLGDKTIAGETVLGRLG</sequence>
<reference key="1">
    <citation type="submission" date="2006-10" db="EMBL/GenBank/DDBJ databases">
        <title>Complete sequence of chromosome of Pelobacter propionicus DSM 2379.</title>
        <authorList>
            <consortium name="US DOE Joint Genome Institute"/>
            <person name="Copeland A."/>
            <person name="Lucas S."/>
            <person name="Lapidus A."/>
            <person name="Barry K."/>
            <person name="Detter J.C."/>
            <person name="Glavina del Rio T."/>
            <person name="Hammon N."/>
            <person name="Israni S."/>
            <person name="Dalin E."/>
            <person name="Tice H."/>
            <person name="Pitluck S."/>
            <person name="Saunders E."/>
            <person name="Brettin T."/>
            <person name="Bruce D."/>
            <person name="Han C."/>
            <person name="Tapia R."/>
            <person name="Schmutz J."/>
            <person name="Larimer F."/>
            <person name="Land M."/>
            <person name="Hauser L."/>
            <person name="Kyrpides N."/>
            <person name="Kim E."/>
            <person name="Lovley D."/>
            <person name="Richardson P."/>
        </authorList>
    </citation>
    <scope>NUCLEOTIDE SEQUENCE [LARGE SCALE GENOMIC DNA]</scope>
    <source>
        <strain>DSM 2379 / NBRC 103807 / OttBd1</strain>
    </source>
</reference>
<comment type="function">
    <text evidence="1">Catalyzes the formation of phosphatidylethanolamine (PtdEtn) from phosphatidylserine (PtdSer).</text>
</comment>
<comment type="catalytic activity">
    <reaction evidence="1">
        <text>a 1,2-diacyl-sn-glycero-3-phospho-L-serine + H(+) = a 1,2-diacyl-sn-glycero-3-phosphoethanolamine + CO2</text>
        <dbReference type="Rhea" id="RHEA:20828"/>
        <dbReference type="ChEBI" id="CHEBI:15378"/>
        <dbReference type="ChEBI" id="CHEBI:16526"/>
        <dbReference type="ChEBI" id="CHEBI:57262"/>
        <dbReference type="ChEBI" id="CHEBI:64612"/>
        <dbReference type="EC" id="4.1.1.65"/>
    </reaction>
</comment>
<comment type="cofactor">
    <cofactor evidence="1">
        <name>pyruvate</name>
        <dbReference type="ChEBI" id="CHEBI:15361"/>
    </cofactor>
    <text evidence="1">Binds 1 pyruvoyl group covalently per subunit.</text>
</comment>
<comment type="pathway">
    <text evidence="1">Phospholipid metabolism; phosphatidylethanolamine biosynthesis; phosphatidylethanolamine from CDP-diacylglycerol: step 2/2.</text>
</comment>
<comment type="subunit">
    <text evidence="1">Heterodimer of a large membrane-associated beta subunit and a small pyruvoyl-containing alpha subunit.</text>
</comment>
<comment type="subcellular location">
    <subcellularLocation>
        <location evidence="1">Cell membrane</location>
        <topology evidence="1">Peripheral membrane protein</topology>
    </subcellularLocation>
</comment>
<comment type="PTM">
    <text evidence="1">Is synthesized initially as an inactive proenzyme. Formation of the active enzyme involves a self-maturation process in which the active site pyruvoyl group is generated from an internal serine residue via an autocatalytic post-translational modification. Two non-identical subunits are generated from the proenzyme in this reaction, and the pyruvate is formed at the N-terminus of the alpha chain, which is derived from the carboxyl end of the proenzyme. The post-translation cleavage follows an unusual pathway, termed non-hydrolytic serinolysis, in which the side chain hydroxyl group of the serine supplies its oxygen atom to form the C-terminus of the beta chain, while the remainder of the serine residue undergoes an oxidative deamination to produce ammonia and the pyruvoyl prosthetic group on the alpha chain.</text>
</comment>
<comment type="similarity">
    <text evidence="1">Belongs to the phosphatidylserine decarboxylase family. PSD-A subfamily.</text>
</comment>
<feature type="chain" id="PRO_1000026674" description="Phosphatidylserine decarboxylase beta chain" evidence="1">
    <location>
        <begin position="1"/>
        <end position="188"/>
    </location>
</feature>
<feature type="chain" id="PRO_1000026675" description="Phosphatidylserine decarboxylase alpha chain" evidence="1">
    <location>
        <begin position="189"/>
        <end position="220"/>
    </location>
</feature>
<feature type="active site" description="Schiff-base intermediate with substrate; via pyruvic acid" evidence="1">
    <location>
        <position position="189"/>
    </location>
</feature>
<feature type="site" description="Cleavage (non-hydrolytic); by autocatalysis" evidence="1">
    <location>
        <begin position="188"/>
        <end position="189"/>
    </location>
</feature>
<feature type="modified residue" description="Pyruvic acid (Ser); by autocatalysis" evidence="1">
    <location>
        <position position="189"/>
    </location>
</feature>
<accession>A1AS38</accession>
<protein>
    <recommendedName>
        <fullName evidence="1">Phosphatidylserine decarboxylase proenzyme</fullName>
        <ecNumber evidence="1">4.1.1.65</ecNumber>
    </recommendedName>
    <component>
        <recommendedName>
            <fullName evidence="1">Phosphatidylserine decarboxylase alpha chain</fullName>
        </recommendedName>
    </component>
    <component>
        <recommendedName>
            <fullName evidence="1">Phosphatidylserine decarboxylase beta chain</fullName>
        </recommendedName>
    </component>
</protein>
<organism>
    <name type="scientific">Pelobacter propionicus (strain DSM 2379 / NBRC 103807 / OttBd1)</name>
    <dbReference type="NCBI Taxonomy" id="338966"/>
    <lineage>
        <taxon>Bacteria</taxon>
        <taxon>Pseudomonadati</taxon>
        <taxon>Thermodesulfobacteriota</taxon>
        <taxon>Desulfuromonadia</taxon>
        <taxon>Desulfuromonadales</taxon>
        <taxon>Desulfuromonadaceae</taxon>
        <taxon>Pelobacter</taxon>
    </lineage>
</organism>